<keyword id="KW-0027">Amidation</keyword>
<keyword id="KW-0903">Direct protein sequencing</keyword>
<keyword id="KW-0527">Neuropeptide</keyword>
<keyword id="KW-0964">Secreted</keyword>
<name>TRP1_PYRAP</name>
<feature type="peptide" id="PRO_0000395662" description="Tachykinin-related peptide 1" evidence="1">
    <location>
        <begin position="1"/>
        <end position="9"/>
    </location>
</feature>
<feature type="modified residue" description="Arginine amide" evidence="1">
    <location>
        <position position="9"/>
    </location>
</feature>
<organism>
    <name type="scientific">Pyrrhocoris apterus</name>
    <name type="common">Sap sucking bug</name>
    <name type="synonym">Cimex apterus</name>
    <dbReference type="NCBI Taxonomy" id="37000"/>
    <lineage>
        <taxon>Eukaryota</taxon>
        <taxon>Metazoa</taxon>
        <taxon>Ecdysozoa</taxon>
        <taxon>Arthropoda</taxon>
        <taxon>Hexapoda</taxon>
        <taxon>Insecta</taxon>
        <taxon>Pterygota</taxon>
        <taxon>Neoptera</taxon>
        <taxon>Paraneoptera</taxon>
        <taxon>Hemiptera</taxon>
        <taxon>Heteroptera</taxon>
        <taxon>Panheteroptera</taxon>
        <taxon>Pentatomomorpha</taxon>
        <taxon>Pyrrhocoroidea</taxon>
        <taxon>Pyrrhocoridae</taxon>
        <taxon>Pyrrhocoris</taxon>
    </lineage>
</organism>
<reference evidence="3" key="1">
    <citation type="journal article" date="2009" name="Peptides">
        <title>Neuropeptides in Heteroptera: identification of allatotropin-related peptide and tachykinin-related peptides using MALDI-TOF mass spectrometry.</title>
        <authorList>
            <person name="Neupert S."/>
            <person name="Russell W.K."/>
            <person name="Russell D.H."/>
            <person name="Lopez J.D. Jr."/>
            <person name="Predel R."/>
            <person name="Nachman R.J."/>
        </authorList>
    </citation>
    <scope>PROTEIN SEQUENCE</scope>
    <scope>SUBCELLULAR LOCATION</scope>
    <scope>TISSUE SPECIFICITY</scope>
    <scope>AMIDATION AT ARG-9</scope>
    <source>
        <tissue evidence="1">Antennal lobe</tissue>
    </source>
</reference>
<accession>P86594</accession>
<protein>
    <recommendedName>
        <fullName evidence="2">Tachykinin-related peptide 1</fullName>
        <shortName evidence="2">TKRP-1</shortName>
    </recommendedName>
</protein>
<dbReference type="GO" id="GO:0005576">
    <property type="term" value="C:extracellular region"/>
    <property type="evidence" value="ECO:0007005"/>
    <property type="project" value="UniProtKB"/>
</dbReference>
<dbReference type="GO" id="GO:0007218">
    <property type="term" value="P:neuropeptide signaling pathway"/>
    <property type="evidence" value="ECO:0007669"/>
    <property type="project" value="UniProtKB-KW"/>
</dbReference>
<evidence type="ECO:0000269" key="1">
    <source>
    </source>
</evidence>
<evidence type="ECO:0000303" key="2">
    <source>
    </source>
</evidence>
<evidence type="ECO:0000305" key="3"/>
<proteinExistence type="evidence at protein level"/>
<sequence length="9" mass="921">GPSGFLGMR</sequence>
<comment type="subcellular location">
    <subcellularLocation>
        <location evidence="1 3">Secreted</location>
    </subcellularLocation>
</comment>
<comment type="tissue specificity">
    <text evidence="1">Expressed in the antennal lobe (at protein level).</text>
</comment>